<comment type="function">
    <text evidence="1">Binds 16S rRNA, required for the assembly of 30S particles and may also be responsible for determining the conformation of the 16S rRNA at the A site.</text>
</comment>
<comment type="subunit">
    <text evidence="1">Part of the 30S ribosomal subunit. Contacts proteins S3 and S10.</text>
</comment>
<comment type="similarity">
    <text evidence="1">Belongs to the universal ribosomal protein uS14 family.</text>
</comment>
<accession>A7X1Z0</accession>
<sequence>MAKKSKIAKERKREELVNKYYELRKELKAKGDYEALRKLPRDSSPTRLTRRCKVTGRPRGVLRKFEMSRIAFREHAHKGQIPGVKKSSW</sequence>
<feature type="chain" id="PRO_1000128598" description="Small ribosomal subunit protein uS14A">
    <location>
        <begin position="1"/>
        <end position="89"/>
    </location>
</feature>
<proteinExistence type="inferred from homology"/>
<keyword id="KW-0687">Ribonucleoprotein</keyword>
<keyword id="KW-0689">Ribosomal protein</keyword>
<keyword id="KW-0694">RNA-binding</keyword>
<keyword id="KW-0699">rRNA-binding</keyword>
<reference key="1">
    <citation type="journal article" date="2008" name="Antimicrob. Agents Chemother.">
        <title>Mutated response regulator graR is responsible for phenotypic conversion of Staphylococcus aureus from heterogeneous vancomycin-intermediate resistance to vancomycin-intermediate resistance.</title>
        <authorList>
            <person name="Neoh H.-M."/>
            <person name="Cui L."/>
            <person name="Yuzawa H."/>
            <person name="Takeuchi F."/>
            <person name="Matsuo M."/>
            <person name="Hiramatsu K."/>
        </authorList>
    </citation>
    <scope>NUCLEOTIDE SEQUENCE [LARGE SCALE GENOMIC DNA]</scope>
    <source>
        <strain>Mu3 / ATCC 700698</strain>
    </source>
</reference>
<gene>
    <name evidence="1" type="primary">rpsN</name>
    <name type="ordered locus">SAHV_1325</name>
</gene>
<name>RS14_STAA1</name>
<organism>
    <name type="scientific">Staphylococcus aureus (strain Mu3 / ATCC 700698)</name>
    <dbReference type="NCBI Taxonomy" id="418127"/>
    <lineage>
        <taxon>Bacteria</taxon>
        <taxon>Bacillati</taxon>
        <taxon>Bacillota</taxon>
        <taxon>Bacilli</taxon>
        <taxon>Bacillales</taxon>
        <taxon>Staphylococcaceae</taxon>
        <taxon>Staphylococcus</taxon>
    </lineage>
</organism>
<dbReference type="EMBL" id="AP009324">
    <property type="protein sequence ID" value="BAF78208.1"/>
    <property type="molecule type" value="Genomic_DNA"/>
</dbReference>
<dbReference type="RefSeq" id="WP_001085655.1">
    <property type="nucleotide sequence ID" value="NZ_CTYB01000021.1"/>
</dbReference>
<dbReference type="SMR" id="A7X1Z0"/>
<dbReference type="GeneID" id="98345705"/>
<dbReference type="KEGG" id="saw:SAHV_1325"/>
<dbReference type="HOGENOM" id="CLU_139869_0_0_9"/>
<dbReference type="GO" id="GO:0005737">
    <property type="term" value="C:cytoplasm"/>
    <property type="evidence" value="ECO:0007669"/>
    <property type="project" value="UniProtKB-ARBA"/>
</dbReference>
<dbReference type="GO" id="GO:0015935">
    <property type="term" value="C:small ribosomal subunit"/>
    <property type="evidence" value="ECO:0007669"/>
    <property type="project" value="TreeGrafter"/>
</dbReference>
<dbReference type="GO" id="GO:0019843">
    <property type="term" value="F:rRNA binding"/>
    <property type="evidence" value="ECO:0007669"/>
    <property type="project" value="UniProtKB-UniRule"/>
</dbReference>
<dbReference type="GO" id="GO:0003735">
    <property type="term" value="F:structural constituent of ribosome"/>
    <property type="evidence" value="ECO:0007669"/>
    <property type="project" value="InterPro"/>
</dbReference>
<dbReference type="GO" id="GO:0006412">
    <property type="term" value="P:translation"/>
    <property type="evidence" value="ECO:0007669"/>
    <property type="project" value="UniProtKB-UniRule"/>
</dbReference>
<dbReference type="FunFam" id="4.10.830.10:FF:000003">
    <property type="entry name" value="30S ribosomal protein S14"/>
    <property type="match status" value="1"/>
</dbReference>
<dbReference type="Gene3D" id="4.10.830.10">
    <property type="entry name" value="30s Ribosomal Protein S14, Chain N"/>
    <property type="match status" value="1"/>
</dbReference>
<dbReference type="HAMAP" id="MF_00537">
    <property type="entry name" value="Ribosomal_uS14_1"/>
    <property type="match status" value="1"/>
</dbReference>
<dbReference type="InterPro" id="IPR001209">
    <property type="entry name" value="Ribosomal_uS14"/>
</dbReference>
<dbReference type="InterPro" id="IPR023036">
    <property type="entry name" value="Ribosomal_uS14_bac/plastid"/>
</dbReference>
<dbReference type="InterPro" id="IPR018271">
    <property type="entry name" value="Ribosomal_uS14_CS"/>
</dbReference>
<dbReference type="InterPro" id="IPR043140">
    <property type="entry name" value="Ribosomal_uS14_sf"/>
</dbReference>
<dbReference type="NCBIfam" id="NF006477">
    <property type="entry name" value="PRK08881.1"/>
    <property type="match status" value="1"/>
</dbReference>
<dbReference type="PANTHER" id="PTHR19836">
    <property type="entry name" value="30S RIBOSOMAL PROTEIN S14"/>
    <property type="match status" value="1"/>
</dbReference>
<dbReference type="PANTHER" id="PTHR19836:SF19">
    <property type="entry name" value="SMALL RIBOSOMAL SUBUNIT PROTEIN US14M"/>
    <property type="match status" value="1"/>
</dbReference>
<dbReference type="Pfam" id="PF00253">
    <property type="entry name" value="Ribosomal_S14"/>
    <property type="match status" value="1"/>
</dbReference>
<dbReference type="SUPFAM" id="SSF57716">
    <property type="entry name" value="Glucocorticoid receptor-like (DNA-binding domain)"/>
    <property type="match status" value="1"/>
</dbReference>
<dbReference type="PROSITE" id="PS00527">
    <property type="entry name" value="RIBOSOMAL_S14"/>
    <property type="match status" value="1"/>
</dbReference>
<protein>
    <recommendedName>
        <fullName evidence="1">Small ribosomal subunit protein uS14A</fullName>
    </recommendedName>
    <alternativeName>
        <fullName evidence="2">30S ribosomal protein S14</fullName>
    </alternativeName>
</protein>
<evidence type="ECO:0000255" key="1">
    <source>
        <dbReference type="HAMAP-Rule" id="MF_00537"/>
    </source>
</evidence>
<evidence type="ECO:0000305" key="2"/>